<reference key="1">
    <citation type="journal article" date="1999" name="Virology">
        <title>The complete DNA sequence of myxoma virus.</title>
        <authorList>
            <person name="Cameron C."/>
            <person name="Hota-Mitchell S."/>
            <person name="Chen L."/>
            <person name="Barrett J.W."/>
            <person name="Cao J.-X."/>
            <person name="Macaulay C."/>
            <person name="Willer D.O."/>
            <person name="Evans D.H."/>
            <person name="McFadden G."/>
        </authorList>
    </citation>
    <scope>NUCLEOTIDE SEQUENCE [LARGE SCALE GENOMIC DNA]</scope>
</reference>
<feature type="chain" id="PRO_0000099396" description="Probable host range protein 2-1">
    <location>
        <begin position="1"/>
        <end position="158"/>
    </location>
</feature>
<feature type="strand" evidence="3">
    <location>
        <begin position="6"/>
        <end position="11"/>
    </location>
</feature>
<feature type="turn" evidence="3">
    <location>
        <begin position="12"/>
        <end position="15"/>
    </location>
</feature>
<feature type="strand" evidence="3">
    <location>
        <begin position="16"/>
        <end position="19"/>
    </location>
</feature>
<feature type="strand" evidence="3">
    <location>
        <begin position="24"/>
        <end position="27"/>
    </location>
</feature>
<feature type="strand" evidence="3">
    <location>
        <begin position="30"/>
        <end position="36"/>
    </location>
</feature>
<feature type="strand" evidence="3">
    <location>
        <begin position="41"/>
        <end position="50"/>
    </location>
</feature>
<feature type="strand" evidence="3">
    <location>
        <begin position="61"/>
        <end position="64"/>
    </location>
</feature>
<feature type="strand" evidence="3">
    <location>
        <begin position="67"/>
        <end position="69"/>
    </location>
</feature>
<feature type="strand" evidence="3">
    <location>
        <begin position="72"/>
        <end position="76"/>
    </location>
</feature>
<feature type="strand" evidence="3">
    <location>
        <begin position="81"/>
        <end position="91"/>
    </location>
</feature>
<feature type="strand" evidence="3">
    <location>
        <begin position="93"/>
        <end position="99"/>
    </location>
</feature>
<feature type="helix" evidence="3">
    <location>
        <begin position="103"/>
        <end position="106"/>
    </location>
</feature>
<feature type="strand" evidence="3">
    <location>
        <begin position="111"/>
        <end position="115"/>
    </location>
</feature>
<feature type="turn" evidence="3">
    <location>
        <begin position="116"/>
        <end position="119"/>
    </location>
</feature>
<feature type="strand" evidence="3">
    <location>
        <begin position="120"/>
        <end position="125"/>
    </location>
</feature>
<feature type="strand" evidence="3">
    <location>
        <begin position="132"/>
        <end position="136"/>
    </location>
</feature>
<feature type="helix" evidence="3">
    <location>
        <begin position="139"/>
        <end position="141"/>
    </location>
</feature>
<evidence type="ECO:0000250" key="1"/>
<evidence type="ECO:0000305" key="2"/>
<evidence type="ECO:0007829" key="3">
    <source>
        <dbReference type="PDB" id="6S5I"/>
    </source>
</evidence>
<protein>
    <recommendedName>
        <fullName>Probable host range protein 2-1</fullName>
    </recommendedName>
</protein>
<dbReference type="EMBL" id="AF170726">
    <property type="protein sequence ID" value="AAF14950.1"/>
    <property type="molecule type" value="Genomic_DNA"/>
</dbReference>
<dbReference type="RefSeq" id="NP_051776.1">
    <property type="nucleotide sequence ID" value="NC_001132.2"/>
</dbReference>
<dbReference type="PDB" id="6S5I">
    <property type="method" value="X-ray"/>
    <property type="resolution" value="2.45 A"/>
    <property type="chains" value="A=1-158"/>
</dbReference>
<dbReference type="PDB" id="7U0V">
    <property type="method" value="X-ray"/>
    <property type="resolution" value="2.45 A"/>
    <property type="chains" value="A=1-158"/>
</dbReference>
<dbReference type="PDB" id="7U0W">
    <property type="method" value="X-ray"/>
    <property type="resolution" value="3.21 A"/>
    <property type="chains" value="A/B=1-158"/>
</dbReference>
<dbReference type="PDBsum" id="6S5I"/>
<dbReference type="PDBsum" id="7U0V"/>
<dbReference type="PDBsum" id="7U0W"/>
<dbReference type="SMR" id="P68550"/>
<dbReference type="GeneID" id="932190"/>
<dbReference type="KEGG" id="vg:932190"/>
<dbReference type="Proteomes" id="UP000000867">
    <property type="component" value="Segment"/>
</dbReference>
<dbReference type="GO" id="GO:0016032">
    <property type="term" value="P:viral process"/>
    <property type="evidence" value="ECO:0007669"/>
    <property type="project" value="InterPro"/>
</dbReference>
<dbReference type="InterPro" id="IPR004967">
    <property type="entry name" value="Poxvirus_C7/F8A"/>
</dbReference>
<dbReference type="Pfam" id="PF03287">
    <property type="entry name" value="Pox_C7_F8A"/>
    <property type="match status" value="1"/>
</dbReference>
<dbReference type="PIRSF" id="PIRSF003779">
    <property type="entry name" value="VAC_C7L"/>
    <property type="match status" value="1"/>
</dbReference>
<gene>
    <name type="ordered locus">m062R</name>
</gene>
<organismHost>
    <name type="scientific">Oryctolagus cuniculus</name>
    <name type="common">Rabbit</name>
    <dbReference type="NCBI Taxonomy" id="9986"/>
</organismHost>
<keyword id="KW-0002">3D-structure</keyword>
<keyword id="KW-0244">Early protein</keyword>
<keyword id="KW-1185">Reference proteome</keyword>
<sequence length="158" mass="18392">MGVQHKLDIFLVSEGIAIKEANLLKGDSYGCTIKIKLDKEKTFKFVIVLEPEWIDEIKPIYMKVNDESVELELDYKDAIKRIYSAEVVLCSDSVINLFSDVDVSYTCEYPTIKVNTIKKYYSVQNRGMTYVHIESPINTKDKCWFVEKNGWYEDRTHS</sequence>
<organism>
    <name type="scientific">Myxoma virus (strain Lausanne)</name>
    <name type="common">MYXV</name>
    <dbReference type="NCBI Taxonomy" id="31530"/>
    <lineage>
        <taxon>Viruses</taxon>
        <taxon>Varidnaviria</taxon>
        <taxon>Bamfordvirae</taxon>
        <taxon>Nucleocytoviricota</taxon>
        <taxon>Pokkesviricetes</taxon>
        <taxon>Chitovirales</taxon>
        <taxon>Poxviridae</taxon>
        <taxon>Chordopoxvirinae</taxon>
        <taxon>Leporipoxvirus</taxon>
        <taxon>Myxoma virus</taxon>
    </lineage>
</organism>
<comment type="function">
    <text evidence="1">Plays a role for multiplication of the virus in different cell types.</text>
</comment>
<comment type="similarity">
    <text evidence="2">Belongs to the poxviridae C7 protein family.</text>
</comment>
<proteinExistence type="evidence at protein level"/>
<accession>P68550</accession>
<accession>P28850</accession>
<name>VH21_MYXVL</name>